<gene>
    <name evidence="1" type="primary">rpmD</name>
    <name type="ordered locus">LCK_01578</name>
</gene>
<reference key="1">
    <citation type="journal article" date="2008" name="J. Bacteriol.">
        <title>Complete genome sequence of Leuconostoc citreum KM20.</title>
        <authorList>
            <person name="Kim J.F."/>
            <person name="Jeong H."/>
            <person name="Lee J.-S."/>
            <person name="Choi S.-H."/>
            <person name="Ha M."/>
            <person name="Hur C.-G."/>
            <person name="Kim J.-S."/>
            <person name="Lee S."/>
            <person name="Park H.-S."/>
            <person name="Park Y.-H."/>
            <person name="Oh T.K."/>
        </authorList>
    </citation>
    <scope>NUCLEOTIDE SEQUENCE [LARGE SCALE GENOMIC DNA]</scope>
    <source>
        <strain>KM20</strain>
    </source>
</reference>
<name>RL30_LEUCK</name>
<accession>B1MVZ7</accession>
<protein>
    <recommendedName>
        <fullName evidence="1">Large ribosomal subunit protein uL30</fullName>
    </recommendedName>
    <alternativeName>
        <fullName evidence="2">50S ribosomal protein L30</fullName>
    </alternativeName>
</protein>
<keyword id="KW-1185">Reference proteome</keyword>
<keyword id="KW-0687">Ribonucleoprotein</keyword>
<keyword id="KW-0689">Ribosomal protein</keyword>
<evidence type="ECO:0000255" key="1">
    <source>
        <dbReference type="HAMAP-Rule" id="MF_01371"/>
    </source>
</evidence>
<evidence type="ECO:0000305" key="2"/>
<proteinExistence type="inferred from homology"/>
<sequence length="60" mass="6487">MADLKITLIKSAAHRLPKQRAIVKSLGLGRVSSSVVKPNNEATRGAIFHIAHLVSVEEVK</sequence>
<dbReference type="EMBL" id="DQ489736">
    <property type="protein sequence ID" value="ACA83401.1"/>
    <property type="molecule type" value="Genomic_DNA"/>
</dbReference>
<dbReference type="RefSeq" id="WP_004899438.1">
    <property type="nucleotide sequence ID" value="NC_010471.1"/>
</dbReference>
<dbReference type="SMR" id="B1MVZ7"/>
<dbReference type="STRING" id="349519.LCK_01578"/>
<dbReference type="GeneID" id="61103258"/>
<dbReference type="KEGG" id="lci:LCK_01578"/>
<dbReference type="eggNOG" id="COG1841">
    <property type="taxonomic scope" value="Bacteria"/>
</dbReference>
<dbReference type="HOGENOM" id="CLU_131047_2_1_9"/>
<dbReference type="Proteomes" id="UP000002166">
    <property type="component" value="Chromosome"/>
</dbReference>
<dbReference type="GO" id="GO:0022625">
    <property type="term" value="C:cytosolic large ribosomal subunit"/>
    <property type="evidence" value="ECO:0007669"/>
    <property type="project" value="TreeGrafter"/>
</dbReference>
<dbReference type="GO" id="GO:0003735">
    <property type="term" value="F:structural constituent of ribosome"/>
    <property type="evidence" value="ECO:0007669"/>
    <property type="project" value="InterPro"/>
</dbReference>
<dbReference type="GO" id="GO:0006412">
    <property type="term" value="P:translation"/>
    <property type="evidence" value="ECO:0007669"/>
    <property type="project" value="UniProtKB-UniRule"/>
</dbReference>
<dbReference type="CDD" id="cd01658">
    <property type="entry name" value="Ribosomal_L30"/>
    <property type="match status" value="1"/>
</dbReference>
<dbReference type="Gene3D" id="3.30.1390.20">
    <property type="entry name" value="Ribosomal protein L30, ferredoxin-like fold domain"/>
    <property type="match status" value="1"/>
</dbReference>
<dbReference type="HAMAP" id="MF_01371_B">
    <property type="entry name" value="Ribosomal_uL30_B"/>
    <property type="match status" value="1"/>
</dbReference>
<dbReference type="InterPro" id="IPR036919">
    <property type="entry name" value="Ribo_uL30_ferredoxin-like_sf"/>
</dbReference>
<dbReference type="InterPro" id="IPR005996">
    <property type="entry name" value="Ribosomal_uL30_bac-type"/>
</dbReference>
<dbReference type="InterPro" id="IPR016082">
    <property type="entry name" value="Ribosomal_uL30_ferredoxin-like"/>
</dbReference>
<dbReference type="NCBIfam" id="TIGR01308">
    <property type="entry name" value="rpmD_bact"/>
    <property type="match status" value="1"/>
</dbReference>
<dbReference type="PANTHER" id="PTHR15892:SF2">
    <property type="entry name" value="LARGE RIBOSOMAL SUBUNIT PROTEIN UL30M"/>
    <property type="match status" value="1"/>
</dbReference>
<dbReference type="PANTHER" id="PTHR15892">
    <property type="entry name" value="MITOCHONDRIAL RIBOSOMAL PROTEIN L30"/>
    <property type="match status" value="1"/>
</dbReference>
<dbReference type="Pfam" id="PF00327">
    <property type="entry name" value="Ribosomal_L30"/>
    <property type="match status" value="1"/>
</dbReference>
<dbReference type="PIRSF" id="PIRSF002211">
    <property type="entry name" value="Ribosomal_L30_bac-type"/>
    <property type="match status" value="1"/>
</dbReference>
<dbReference type="SUPFAM" id="SSF55129">
    <property type="entry name" value="Ribosomal protein L30p/L7e"/>
    <property type="match status" value="1"/>
</dbReference>
<comment type="subunit">
    <text evidence="1">Part of the 50S ribosomal subunit.</text>
</comment>
<comment type="similarity">
    <text evidence="1">Belongs to the universal ribosomal protein uL30 family.</text>
</comment>
<organism>
    <name type="scientific">Leuconostoc citreum (strain KM20)</name>
    <dbReference type="NCBI Taxonomy" id="349519"/>
    <lineage>
        <taxon>Bacteria</taxon>
        <taxon>Bacillati</taxon>
        <taxon>Bacillota</taxon>
        <taxon>Bacilli</taxon>
        <taxon>Lactobacillales</taxon>
        <taxon>Lactobacillaceae</taxon>
        <taxon>Leuconostoc</taxon>
    </lineage>
</organism>
<feature type="chain" id="PRO_1000144698" description="Large ribosomal subunit protein uL30">
    <location>
        <begin position="1"/>
        <end position="60"/>
    </location>
</feature>